<reference key="1">
    <citation type="journal article" date="2004" name="Proc. Natl. Acad. Sci. U.S.A.">
        <title>Structural flexibility in the Burkholderia mallei genome.</title>
        <authorList>
            <person name="Nierman W.C."/>
            <person name="DeShazer D."/>
            <person name="Kim H.S."/>
            <person name="Tettelin H."/>
            <person name="Nelson K.E."/>
            <person name="Feldblyum T.V."/>
            <person name="Ulrich R.L."/>
            <person name="Ronning C.M."/>
            <person name="Brinkac L.M."/>
            <person name="Daugherty S.C."/>
            <person name="Davidsen T.D."/>
            <person name="DeBoy R.T."/>
            <person name="Dimitrov G."/>
            <person name="Dodson R.J."/>
            <person name="Durkin A.S."/>
            <person name="Gwinn M.L."/>
            <person name="Haft D.H."/>
            <person name="Khouri H.M."/>
            <person name="Kolonay J.F."/>
            <person name="Madupu R."/>
            <person name="Mohammoud Y."/>
            <person name="Nelson W.C."/>
            <person name="Radune D."/>
            <person name="Romero C.M."/>
            <person name="Sarria S."/>
            <person name="Selengut J."/>
            <person name="Shamblin C."/>
            <person name="Sullivan S.A."/>
            <person name="White O."/>
            <person name="Yu Y."/>
            <person name="Zafar N."/>
            <person name="Zhou L."/>
            <person name="Fraser C.M."/>
        </authorList>
    </citation>
    <scope>NUCLEOTIDE SEQUENCE [LARGE SCALE GENOMIC DNA]</scope>
    <source>
        <strain>ATCC 23344</strain>
    </source>
</reference>
<dbReference type="EC" id="3.5.1.96" evidence="1"/>
<dbReference type="EMBL" id="CP000010">
    <property type="protein sequence ID" value="AAU49282.1"/>
    <property type="molecule type" value="Genomic_DNA"/>
</dbReference>
<dbReference type="RefSeq" id="WP_004191679.1">
    <property type="nucleotide sequence ID" value="NC_006348.1"/>
</dbReference>
<dbReference type="RefSeq" id="YP_102386.1">
    <property type="nucleotide sequence ID" value="NC_006348.1"/>
</dbReference>
<dbReference type="SMR" id="Q62LN3"/>
<dbReference type="GeneID" id="92978365"/>
<dbReference type="KEGG" id="bma:BMA0596"/>
<dbReference type="PATRIC" id="fig|243160.12.peg.612"/>
<dbReference type="eggNOG" id="COG2988">
    <property type="taxonomic scope" value="Bacteria"/>
</dbReference>
<dbReference type="HOGENOM" id="CLU_071608_0_0_4"/>
<dbReference type="UniPathway" id="UPA00185">
    <property type="reaction ID" value="UER00283"/>
</dbReference>
<dbReference type="Proteomes" id="UP000006693">
    <property type="component" value="Chromosome 1"/>
</dbReference>
<dbReference type="GO" id="GO:0016788">
    <property type="term" value="F:hydrolase activity, acting on ester bonds"/>
    <property type="evidence" value="ECO:0007669"/>
    <property type="project" value="UniProtKB-UniRule"/>
</dbReference>
<dbReference type="GO" id="GO:0009017">
    <property type="term" value="F:succinylglutamate desuccinylase activity"/>
    <property type="evidence" value="ECO:0007669"/>
    <property type="project" value="UniProtKB-EC"/>
</dbReference>
<dbReference type="GO" id="GO:0008270">
    <property type="term" value="F:zinc ion binding"/>
    <property type="evidence" value="ECO:0007669"/>
    <property type="project" value="UniProtKB-UniRule"/>
</dbReference>
<dbReference type="GO" id="GO:0019544">
    <property type="term" value="P:arginine catabolic process to glutamate"/>
    <property type="evidence" value="ECO:0007669"/>
    <property type="project" value="UniProtKB-UniRule"/>
</dbReference>
<dbReference type="GO" id="GO:0019545">
    <property type="term" value="P:arginine catabolic process to succinate"/>
    <property type="evidence" value="ECO:0007669"/>
    <property type="project" value="UniProtKB-UniRule"/>
</dbReference>
<dbReference type="CDD" id="cd03855">
    <property type="entry name" value="M14_ASTE"/>
    <property type="match status" value="1"/>
</dbReference>
<dbReference type="Gene3D" id="3.40.630.10">
    <property type="entry name" value="Zn peptidases"/>
    <property type="match status" value="1"/>
</dbReference>
<dbReference type="HAMAP" id="MF_00767">
    <property type="entry name" value="Arg_catab_AstE"/>
    <property type="match status" value="1"/>
</dbReference>
<dbReference type="InterPro" id="IPR050178">
    <property type="entry name" value="AspA/AstE_fam"/>
</dbReference>
<dbReference type="InterPro" id="IPR055438">
    <property type="entry name" value="AstE_AspA_cat"/>
</dbReference>
<dbReference type="InterPro" id="IPR007036">
    <property type="entry name" value="Aste_AspA_hybrid_dom"/>
</dbReference>
<dbReference type="InterPro" id="IPR016681">
    <property type="entry name" value="SuccinylGlu_desuccinylase"/>
</dbReference>
<dbReference type="NCBIfam" id="TIGR03242">
    <property type="entry name" value="arg_catab_astE"/>
    <property type="match status" value="1"/>
</dbReference>
<dbReference type="NCBIfam" id="NF003706">
    <property type="entry name" value="PRK05324.1"/>
    <property type="match status" value="1"/>
</dbReference>
<dbReference type="PANTHER" id="PTHR15162">
    <property type="entry name" value="ASPARTOACYLASE"/>
    <property type="match status" value="1"/>
</dbReference>
<dbReference type="PANTHER" id="PTHR15162:SF7">
    <property type="entry name" value="SUCCINYLGLUTAMATE DESUCCINYLASE"/>
    <property type="match status" value="1"/>
</dbReference>
<dbReference type="Pfam" id="PF24827">
    <property type="entry name" value="AstE_AspA_cat"/>
    <property type="match status" value="1"/>
</dbReference>
<dbReference type="Pfam" id="PF04952">
    <property type="entry name" value="AstE_AspA_hybrid"/>
    <property type="match status" value="1"/>
</dbReference>
<dbReference type="PIRSF" id="PIRSF017020">
    <property type="entry name" value="AstE"/>
    <property type="match status" value="1"/>
</dbReference>
<dbReference type="SUPFAM" id="SSF53187">
    <property type="entry name" value="Zn-dependent exopeptidases"/>
    <property type="match status" value="1"/>
</dbReference>
<keyword id="KW-0056">Arginine metabolism</keyword>
<keyword id="KW-0378">Hydrolase</keyword>
<keyword id="KW-0479">Metal-binding</keyword>
<keyword id="KW-1185">Reference proteome</keyword>
<keyword id="KW-0862">Zinc</keyword>
<comment type="function">
    <text evidence="1">Transforms N(2)-succinylglutamate into succinate and glutamate.</text>
</comment>
<comment type="catalytic activity">
    <reaction evidence="1">
        <text>N-succinyl-L-glutamate + H2O = L-glutamate + succinate</text>
        <dbReference type="Rhea" id="RHEA:15169"/>
        <dbReference type="ChEBI" id="CHEBI:15377"/>
        <dbReference type="ChEBI" id="CHEBI:29985"/>
        <dbReference type="ChEBI" id="CHEBI:30031"/>
        <dbReference type="ChEBI" id="CHEBI:58763"/>
        <dbReference type="EC" id="3.5.1.96"/>
    </reaction>
</comment>
<comment type="cofactor">
    <cofactor evidence="1">
        <name>Zn(2+)</name>
        <dbReference type="ChEBI" id="CHEBI:29105"/>
    </cofactor>
    <text evidence="1">Binds 1 zinc ion per subunit.</text>
</comment>
<comment type="pathway">
    <text evidence="1">Amino-acid degradation; L-arginine degradation via AST pathway; L-glutamate and succinate from L-arginine: step 5/5.</text>
</comment>
<comment type="similarity">
    <text evidence="1">Belongs to the AspA/AstE family. Succinylglutamate desuccinylase subfamily.</text>
</comment>
<proteinExistence type="inferred from homology"/>
<evidence type="ECO:0000255" key="1">
    <source>
        <dbReference type="HAMAP-Rule" id="MF_00767"/>
    </source>
</evidence>
<name>ASTE_BURMA</name>
<protein>
    <recommendedName>
        <fullName evidence="1">Succinylglutamate desuccinylase</fullName>
        <ecNumber evidence="1">3.5.1.96</ecNumber>
    </recommendedName>
</protein>
<accession>Q62LN3</accession>
<gene>
    <name evidence="1" type="primary">astE</name>
    <name type="ordered locus">BMA0596</name>
</gene>
<sequence length="349" mass="37622">MTSSADSGRDAAWLDDFLALTLAGDAPPAEAGECAARAVRWRWLGDGLLRLEPADAAQRMQSVLVSAGVHGDETAPIELLSTLVRDIARGALPLRCRLLVALGNPGAMRAGERYLDDDLNRLFGGRHAQLAASREAPRAAQLEAAAALFFSTAGRARGARWHIDMHTAIRTSVFEQFALLPHTGEPPTRTMFEWLGEAQIAAVLLHTTKGSTFSHFTAQACGALACTLELGKVMPFGANDLSRFAPADAAVRRLVSGRRDAPRGALPRAFTVVDQITKQSDALELFVANDVPNFTPFARGTLLARDGDYRYAVRHEQERIVFPNPSVKPGLRAGLLVIETTRDTHAALA</sequence>
<feature type="chain" id="PRO_0000257705" description="Succinylglutamate desuccinylase">
    <location>
        <begin position="1"/>
        <end position="349"/>
    </location>
</feature>
<feature type="active site" evidence="1">
    <location>
        <position position="229"/>
    </location>
</feature>
<feature type="binding site" evidence="1">
    <location>
        <position position="70"/>
    </location>
    <ligand>
        <name>Zn(2+)</name>
        <dbReference type="ChEBI" id="CHEBI:29105"/>
    </ligand>
</feature>
<feature type="binding site" evidence="1">
    <location>
        <position position="73"/>
    </location>
    <ligand>
        <name>Zn(2+)</name>
        <dbReference type="ChEBI" id="CHEBI:29105"/>
    </ligand>
</feature>
<feature type="binding site" evidence="1">
    <location>
        <position position="166"/>
    </location>
    <ligand>
        <name>Zn(2+)</name>
        <dbReference type="ChEBI" id="CHEBI:29105"/>
    </ligand>
</feature>
<organism>
    <name type="scientific">Burkholderia mallei (strain ATCC 23344)</name>
    <dbReference type="NCBI Taxonomy" id="243160"/>
    <lineage>
        <taxon>Bacteria</taxon>
        <taxon>Pseudomonadati</taxon>
        <taxon>Pseudomonadota</taxon>
        <taxon>Betaproteobacteria</taxon>
        <taxon>Burkholderiales</taxon>
        <taxon>Burkholderiaceae</taxon>
        <taxon>Burkholderia</taxon>
        <taxon>pseudomallei group</taxon>
    </lineage>
</organism>